<organism>
    <name type="scientific">Caenorhabditis elegans</name>
    <dbReference type="NCBI Taxonomy" id="6239"/>
    <lineage>
        <taxon>Eukaryota</taxon>
        <taxon>Metazoa</taxon>
        <taxon>Ecdysozoa</taxon>
        <taxon>Nematoda</taxon>
        <taxon>Chromadorea</taxon>
        <taxon>Rhabditida</taxon>
        <taxon>Rhabditina</taxon>
        <taxon>Rhabditomorpha</taxon>
        <taxon>Rhabditoidea</taxon>
        <taxon>Rhabditidae</taxon>
        <taxon>Peloderinae</taxon>
        <taxon>Caenorhabditis</taxon>
    </lineage>
</organism>
<sequence length="375" mass="42795">MPRVVIGMSGGVDSAVSAFLLKKRGFDVIGLHMINWDVQEEGTSHCPRSKDESDARNVCDRLNIPFHTVNFVKEYWNDVFLKFLENYKNGRTTVPDIDCNQSIKFDVFHKIAREKFNADFIATGHYATTNFGDFQQNAKDSDEIRLFSGKDPLKDQTFFLCTVNQEQLKRAMFPLGSLQKSEVKRIAEEQGFQEVAKKPESMGICFIGKKKRFSDFLDEYIEPKPGRILLKNGSEIGNHHGIHQFTIGKRINGKYLEARSHLGFFVSHIHSDTGDIIACEGSHHPDLYASRFLINHPKWIRTFDPFNRISSNNFLCRIQRTHPPIPCVAEKQEQFLSVIPRLALRATAPGQMCVFYNTKNECLGGGEIMNIQETL</sequence>
<protein>
    <recommendedName>
        <fullName>Probable mitochondrial tRNA-specific 2-thiouridylase 1</fullName>
        <ecNumber evidence="2">2.8.1.14</ecNumber>
    </recommendedName>
</protein>
<name>MTU1_CAEEL</name>
<proteinExistence type="inferred from homology"/>
<gene>
    <name evidence="4" type="primary">mttu-1</name>
    <name evidence="4" type="ORF">B0035.16</name>
</gene>
<keyword id="KW-0067">ATP-binding</keyword>
<keyword id="KW-1015">Disulfide bond</keyword>
<keyword id="KW-0496">Mitochondrion</keyword>
<keyword id="KW-0547">Nucleotide-binding</keyword>
<keyword id="KW-1185">Reference proteome</keyword>
<keyword id="KW-0694">RNA-binding</keyword>
<keyword id="KW-0808">Transferase</keyword>
<keyword id="KW-0819">tRNA processing</keyword>
<keyword id="KW-0820">tRNA-binding</keyword>
<dbReference type="EC" id="2.8.1.14" evidence="2"/>
<dbReference type="EMBL" id="Z73102">
    <property type="protein sequence ID" value="CAA97418.2"/>
    <property type="molecule type" value="Genomic_DNA"/>
</dbReference>
<dbReference type="PIR" id="T18663">
    <property type="entry name" value="T18663"/>
</dbReference>
<dbReference type="RefSeq" id="NP_502120.1">
    <property type="nucleotide sequence ID" value="NM_069719.5"/>
</dbReference>
<dbReference type="SMR" id="Q17440"/>
<dbReference type="FunCoup" id="Q17440">
    <property type="interactions" value="2033"/>
</dbReference>
<dbReference type="STRING" id="6239.B0035.16.1"/>
<dbReference type="PaxDb" id="6239-B0035.16"/>
<dbReference type="EnsemblMetazoa" id="B0035.16.1">
    <property type="protein sequence ID" value="B0035.16.1"/>
    <property type="gene ID" value="WBGene00007114"/>
</dbReference>
<dbReference type="GeneID" id="178038"/>
<dbReference type="KEGG" id="cel:CELE_B0035.16"/>
<dbReference type="UCSC" id="B0035.16">
    <property type="organism name" value="c. elegans"/>
</dbReference>
<dbReference type="AGR" id="WB:WBGene00007114"/>
<dbReference type="CTD" id="178038"/>
<dbReference type="WormBase" id="B0035.16">
    <property type="protein sequence ID" value="CE26926"/>
    <property type="gene ID" value="WBGene00007114"/>
    <property type="gene designation" value="mttu-1"/>
</dbReference>
<dbReference type="eggNOG" id="KOG2805">
    <property type="taxonomic scope" value="Eukaryota"/>
</dbReference>
<dbReference type="GeneTree" id="ENSGT00390000014323"/>
<dbReference type="HOGENOM" id="CLU_035188_1_0_1"/>
<dbReference type="InParanoid" id="Q17440"/>
<dbReference type="OMA" id="KIRYRKQ"/>
<dbReference type="OrthoDB" id="3685at2759"/>
<dbReference type="PhylomeDB" id="Q17440"/>
<dbReference type="PRO" id="PR:Q17440"/>
<dbReference type="Proteomes" id="UP000001940">
    <property type="component" value="Chromosome IV"/>
</dbReference>
<dbReference type="Bgee" id="WBGene00007114">
    <property type="expression patterns" value="Expressed in germ line (C elegans) and 4 other cell types or tissues"/>
</dbReference>
<dbReference type="GO" id="GO:0005739">
    <property type="term" value="C:mitochondrion"/>
    <property type="evidence" value="ECO:0000250"/>
    <property type="project" value="WormBase"/>
</dbReference>
<dbReference type="GO" id="GO:0005524">
    <property type="term" value="F:ATP binding"/>
    <property type="evidence" value="ECO:0007669"/>
    <property type="project" value="UniProtKB-KW"/>
</dbReference>
<dbReference type="GO" id="GO:0000049">
    <property type="term" value="F:tRNA binding"/>
    <property type="evidence" value="ECO:0007669"/>
    <property type="project" value="UniProtKB-KW"/>
</dbReference>
<dbReference type="GO" id="GO:0061708">
    <property type="term" value="F:tRNA-5-taurinomethyluridine 2-sulfurtransferase"/>
    <property type="evidence" value="ECO:0007669"/>
    <property type="project" value="UniProtKB-EC"/>
</dbReference>
<dbReference type="GO" id="GO:0002143">
    <property type="term" value="P:tRNA wobble position uridine thiolation"/>
    <property type="evidence" value="ECO:0000318"/>
    <property type="project" value="GO_Central"/>
</dbReference>
<dbReference type="CDD" id="cd01998">
    <property type="entry name" value="MnmA_TRMU-like"/>
    <property type="match status" value="1"/>
</dbReference>
<dbReference type="FunFam" id="3.40.50.620:FF:000104">
    <property type="entry name" value="Mitochondrial tRNA-specific 2-thiouridylase 1"/>
    <property type="match status" value="1"/>
</dbReference>
<dbReference type="FunFam" id="2.30.30.280:FF:000001">
    <property type="entry name" value="tRNA-specific 2-thiouridylase MnmA"/>
    <property type="match status" value="1"/>
</dbReference>
<dbReference type="Gene3D" id="2.30.30.280">
    <property type="entry name" value="Adenine nucleotide alpha hydrolases-like domains"/>
    <property type="match status" value="1"/>
</dbReference>
<dbReference type="Gene3D" id="3.40.50.620">
    <property type="entry name" value="HUPs"/>
    <property type="match status" value="1"/>
</dbReference>
<dbReference type="Gene3D" id="2.40.30.10">
    <property type="entry name" value="Translation factors"/>
    <property type="match status" value="1"/>
</dbReference>
<dbReference type="HAMAP" id="MF_00144">
    <property type="entry name" value="tRNA_thiouridyl_MnmA"/>
    <property type="match status" value="1"/>
</dbReference>
<dbReference type="InterPro" id="IPR004506">
    <property type="entry name" value="MnmA-like"/>
</dbReference>
<dbReference type="InterPro" id="IPR046885">
    <property type="entry name" value="MnmA-like_C"/>
</dbReference>
<dbReference type="InterPro" id="IPR046884">
    <property type="entry name" value="MnmA-like_central"/>
</dbReference>
<dbReference type="InterPro" id="IPR023382">
    <property type="entry name" value="MnmA-like_central_sf"/>
</dbReference>
<dbReference type="InterPro" id="IPR014729">
    <property type="entry name" value="Rossmann-like_a/b/a_fold"/>
</dbReference>
<dbReference type="NCBIfam" id="NF001138">
    <property type="entry name" value="PRK00143.1"/>
    <property type="match status" value="1"/>
</dbReference>
<dbReference type="NCBIfam" id="TIGR00420">
    <property type="entry name" value="trmU"/>
    <property type="match status" value="1"/>
</dbReference>
<dbReference type="PANTHER" id="PTHR11933:SF5">
    <property type="entry name" value="MITOCHONDRIAL TRNA-SPECIFIC 2-THIOURIDYLASE 1"/>
    <property type="match status" value="1"/>
</dbReference>
<dbReference type="PANTHER" id="PTHR11933">
    <property type="entry name" value="TRNA 5-METHYLAMINOMETHYL-2-THIOURIDYLATE -METHYLTRANSFERASE"/>
    <property type="match status" value="1"/>
</dbReference>
<dbReference type="Pfam" id="PF03054">
    <property type="entry name" value="tRNA_Me_trans"/>
    <property type="match status" value="1"/>
</dbReference>
<dbReference type="Pfam" id="PF20258">
    <property type="entry name" value="tRNA_Me_trans_C"/>
    <property type="match status" value="1"/>
</dbReference>
<dbReference type="Pfam" id="PF20259">
    <property type="entry name" value="tRNA_Me_trans_M"/>
    <property type="match status" value="1"/>
</dbReference>
<dbReference type="SUPFAM" id="SSF52402">
    <property type="entry name" value="Adenine nucleotide alpha hydrolases-like"/>
    <property type="match status" value="1"/>
</dbReference>
<comment type="function">
    <text evidence="2">Catalyzes the 2-thiolation of uridine at the wobble position (U34) of mitochondrial tRNA(Lys), tRNA(Glu) and tRNA(Gln). Required for the formation of 5-taurinomethyl-2-thiouridine (tm5s2U) of mitochondrial tRNA(Lys), tRNA(Glu), and tRNA(Gln) at the wobble position. ATP is required to activate the C2 atom of the wobble base.</text>
</comment>
<comment type="catalytic activity">
    <reaction evidence="2">
        <text>5-taurinomethyluridine(34) in tRNA + S-sulfanyl-L-cysteinyl-[protein] + AH2 + ATP = 5-taurinomethyl-2-thiouridine(34) in tRNA + L-cysteinyl-[protein] + A + AMP + diphosphate + H(+)</text>
        <dbReference type="Rhea" id="RHEA:47040"/>
        <dbReference type="Rhea" id="RHEA-COMP:10131"/>
        <dbReference type="Rhea" id="RHEA-COMP:11726"/>
        <dbReference type="Rhea" id="RHEA-COMP:11732"/>
        <dbReference type="Rhea" id="RHEA-COMP:11733"/>
        <dbReference type="ChEBI" id="CHEBI:13193"/>
        <dbReference type="ChEBI" id="CHEBI:15378"/>
        <dbReference type="ChEBI" id="CHEBI:17499"/>
        <dbReference type="ChEBI" id="CHEBI:29950"/>
        <dbReference type="ChEBI" id="CHEBI:30616"/>
        <dbReference type="ChEBI" id="CHEBI:33019"/>
        <dbReference type="ChEBI" id="CHEBI:61963"/>
        <dbReference type="ChEBI" id="CHEBI:87171"/>
        <dbReference type="ChEBI" id="CHEBI:87172"/>
        <dbReference type="ChEBI" id="CHEBI:456215"/>
        <dbReference type="EC" id="2.8.1.14"/>
    </reaction>
</comment>
<comment type="subcellular location">
    <subcellularLocation>
        <location evidence="1">Mitochondrion</location>
    </subcellularLocation>
</comment>
<comment type="miscellaneous">
    <text evidence="1">During the reaction, ATP is used to activate the C2 atom of U34 by adenylation. After this, the persulfide sulfur on the catalytic cysteine is transferred to the C2 atom of the wobble base (U34) of mitochondrial tRNA(Lys), tRNA(Glu) and tRNA(Gln). The reaction probably involves hydrogen sulfide that is generated from the persulfide intermediate and that acts as a nucleophile towards the activated C2 atom on U34. Subsequently, a transient disulfide bond is formed between the two active site cysteine residues (By similarity).</text>
</comment>
<comment type="similarity">
    <text evidence="3">Belongs to the MnmA/TRMU family.</text>
</comment>
<accession>Q17440</accession>
<evidence type="ECO:0000250" key="1"/>
<evidence type="ECO:0000250" key="2">
    <source>
        <dbReference type="UniProtKB" id="Q12093"/>
    </source>
</evidence>
<evidence type="ECO:0000305" key="3"/>
<evidence type="ECO:0000312" key="4">
    <source>
        <dbReference type="WormBase" id="B0035.16"/>
    </source>
</evidence>
<reference key="1">
    <citation type="journal article" date="1998" name="Science">
        <title>Genome sequence of the nematode C. elegans: a platform for investigating biology.</title>
        <authorList>
            <consortium name="The C. elegans sequencing consortium"/>
        </authorList>
    </citation>
    <scope>NUCLEOTIDE SEQUENCE [LARGE SCALE GENOMIC DNA]</scope>
    <source>
        <strain>Bristol N2</strain>
    </source>
</reference>
<feature type="chain" id="PRO_0000121707" description="Probable mitochondrial tRNA-specific 2-thiouridylase 1">
    <location>
        <begin position="1"/>
        <end position="375"/>
    </location>
</feature>
<feature type="region of interest" description="Interaction with target base in tRNA" evidence="1">
    <location>
        <begin position="94"/>
        <end position="96"/>
    </location>
</feature>
<feature type="region of interest" description="Interaction with tRNA" evidence="1">
    <location>
        <begin position="154"/>
        <end position="156"/>
    </location>
</feature>
<feature type="region of interest" description="Interaction with tRNA" evidence="1">
    <location>
        <begin position="319"/>
        <end position="320"/>
    </location>
</feature>
<feature type="active site" description="Nucleophile" evidence="1">
    <location>
        <position position="99"/>
    </location>
</feature>
<feature type="active site" description="Cysteine persulfide intermediate" evidence="1">
    <location>
        <position position="205"/>
    </location>
</feature>
<feature type="binding site" evidence="1">
    <location>
        <begin position="7"/>
        <end position="14"/>
    </location>
    <ligand>
        <name>ATP</name>
        <dbReference type="ChEBI" id="CHEBI:30616"/>
    </ligand>
</feature>
<feature type="binding site" evidence="1">
    <location>
        <position position="33"/>
    </location>
    <ligand>
        <name>ATP</name>
        <dbReference type="ChEBI" id="CHEBI:30616"/>
    </ligand>
</feature>
<feature type="binding site" evidence="1">
    <location>
        <position position="124"/>
    </location>
    <ligand>
        <name>ATP</name>
        <dbReference type="ChEBI" id="CHEBI:30616"/>
    </ligand>
</feature>
<feature type="site" description="Interaction with tRNA" evidence="1">
    <location>
        <position position="125"/>
    </location>
</feature>
<feature type="site" description="Interaction with tRNA" evidence="1">
    <location>
        <position position="250"/>
    </location>
</feature>
<feature type="site" description="Interaction with tRNA" evidence="1">
    <location>
        <position position="351"/>
    </location>
</feature>
<feature type="disulfide bond" description="Alternate" evidence="1">
    <location>
        <begin position="99"/>
        <end position="205"/>
    </location>
</feature>